<feature type="chain" id="PRO_0000090196" description="Triosephosphate isomerase">
    <location>
        <begin position="1"/>
        <end position="254"/>
    </location>
</feature>
<feature type="active site" description="Electrophile" evidence="1">
    <location>
        <position position="96"/>
    </location>
</feature>
<feature type="active site" description="Proton acceptor" evidence="1">
    <location>
        <position position="168"/>
    </location>
</feature>
<feature type="binding site" evidence="1">
    <location>
        <begin position="9"/>
        <end position="11"/>
    </location>
    <ligand>
        <name>substrate</name>
    </ligand>
</feature>
<feature type="binding site" evidence="1">
    <location>
        <position position="174"/>
    </location>
    <ligand>
        <name>substrate</name>
    </ligand>
</feature>
<feature type="binding site" evidence="1">
    <location>
        <position position="213"/>
    </location>
    <ligand>
        <name>substrate</name>
    </ligand>
</feature>
<evidence type="ECO:0000255" key="1">
    <source>
        <dbReference type="HAMAP-Rule" id="MF_00147"/>
    </source>
</evidence>
<protein>
    <recommendedName>
        <fullName evidence="1">Triosephosphate isomerase</fullName>
        <shortName evidence="1">TIM</shortName>
        <shortName evidence="1">TPI</shortName>
        <ecNumber evidence="1">5.3.1.1</ecNumber>
    </recommendedName>
    <alternativeName>
        <fullName evidence="1">Triose-phosphate isomerase</fullName>
    </alternativeName>
</protein>
<reference key="1">
    <citation type="journal article" date="1997" name="Curr. Microbiol.">
        <title>Nucleotide sequence of a DNA fragment from Buchnera aphidicola (Aphid endosymbiont) containing the genes aspS-trxB-serS-serC-aroA-rpsA-himD-tpiA.</title>
        <authorList>
            <person name="Thao M.L."/>
            <person name="Baumann P."/>
        </authorList>
    </citation>
    <scope>NUCLEOTIDE SEQUENCE [GENOMIC DNA]</scope>
</reference>
<reference key="2">
    <citation type="journal article" date="2002" name="Science">
        <title>50 million years of genomic stasis in endosymbiotic bacteria.</title>
        <authorList>
            <person name="Tamas I."/>
            <person name="Klasson L."/>
            <person name="Canbaeck B."/>
            <person name="Naeslund A.K."/>
            <person name="Eriksson A.-S."/>
            <person name="Wernegreen J.J."/>
            <person name="Sandstroem J.P."/>
            <person name="Moran N.A."/>
            <person name="Andersson S.G.E."/>
        </authorList>
    </citation>
    <scope>NUCLEOTIDE SEQUENCE [LARGE SCALE GENOMIC DNA]</scope>
    <source>
        <strain>Sg</strain>
    </source>
</reference>
<organism>
    <name type="scientific">Buchnera aphidicola subsp. Schizaphis graminum (strain Sg)</name>
    <dbReference type="NCBI Taxonomy" id="198804"/>
    <lineage>
        <taxon>Bacteria</taxon>
        <taxon>Pseudomonadati</taxon>
        <taxon>Pseudomonadota</taxon>
        <taxon>Gammaproteobacteria</taxon>
        <taxon>Enterobacterales</taxon>
        <taxon>Erwiniaceae</taxon>
        <taxon>Buchnera</taxon>
    </lineage>
</organism>
<name>TPIS_BUCAP</name>
<accession>Q59179</accession>
<proteinExistence type="inferred from homology"/>
<gene>
    <name evidence="1" type="primary">tpiA</name>
    <name type="synonym">tpi</name>
    <name type="ordered locus">BUsg_297</name>
</gene>
<dbReference type="EC" id="5.3.1.1" evidence="1"/>
<dbReference type="EMBL" id="L43549">
    <property type="protein sequence ID" value="AAC05431.1"/>
    <property type="molecule type" value="Genomic_DNA"/>
</dbReference>
<dbReference type="EMBL" id="AE013218">
    <property type="protein sequence ID" value="AAM67852.1"/>
    <property type="molecule type" value="Genomic_DNA"/>
</dbReference>
<dbReference type="RefSeq" id="WP_011053819.1">
    <property type="nucleotide sequence ID" value="NC_004061.1"/>
</dbReference>
<dbReference type="SMR" id="Q59179"/>
<dbReference type="STRING" id="198804.BUsg_297"/>
<dbReference type="GeneID" id="93003767"/>
<dbReference type="KEGG" id="bas:BUsg_297"/>
<dbReference type="eggNOG" id="COG0149">
    <property type="taxonomic scope" value="Bacteria"/>
</dbReference>
<dbReference type="HOGENOM" id="CLU_024251_2_1_6"/>
<dbReference type="UniPathway" id="UPA00109">
    <property type="reaction ID" value="UER00189"/>
</dbReference>
<dbReference type="UniPathway" id="UPA00138"/>
<dbReference type="Proteomes" id="UP000000416">
    <property type="component" value="Chromosome"/>
</dbReference>
<dbReference type="GO" id="GO:0005829">
    <property type="term" value="C:cytosol"/>
    <property type="evidence" value="ECO:0007669"/>
    <property type="project" value="TreeGrafter"/>
</dbReference>
<dbReference type="GO" id="GO:0004807">
    <property type="term" value="F:triose-phosphate isomerase activity"/>
    <property type="evidence" value="ECO:0007669"/>
    <property type="project" value="UniProtKB-UniRule"/>
</dbReference>
<dbReference type="GO" id="GO:0006094">
    <property type="term" value="P:gluconeogenesis"/>
    <property type="evidence" value="ECO:0007669"/>
    <property type="project" value="UniProtKB-UniRule"/>
</dbReference>
<dbReference type="GO" id="GO:0046166">
    <property type="term" value="P:glyceraldehyde-3-phosphate biosynthetic process"/>
    <property type="evidence" value="ECO:0007669"/>
    <property type="project" value="TreeGrafter"/>
</dbReference>
<dbReference type="GO" id="GO:0019563">
    <property type="term" value="P:glycerol catabolic process"/>
    <property type="evidence" value="ECO:0007669"/>
    <property type="project" value="TreeGrafter"/>
</dbReference>
<dbReference type="GO" id="GO:0006096">
    <property type="term" value="P:glycolytic process"/>
    <property type="evidence" value="ECO:0007669"/>
    <property type="project" value="UniProtKB-UniRule"/>
</dbReference>
<dbReference type="CDD" id="cd00311">
    <property type="entry name" value="TIM"/>
    <property type="match status" value="1"/>
</dbReference>
<dbReference type="FunFam" id="3.20.20.70:FF:000016">
    <property type="entry name" value="Triosephosphate isomerase"/>
    <property type="match status" value="1"/>
</dbReference>
<dbReference type="Gene3D" id="3.20.20.70">
    <property type="entry name" value="Aldolase class I"/>
    <property type="match status" value="1"/>
</dbReference>
<dbReference type="HAMAP" id="MF_00147_B">
    <property type="entry name" value="TIM_B"/>
    <property type="match status" value="1"/>
</dbReference>
<dbReference type="InterPro" id="IPR013785">
    <property type="entry name" value="Aldolase_TIM"/>
</dbReference>
<dbReference type="InterPro" id="IPR035990">
    <property type="entry name" value="TIM_sf"/>
</dbReference>
<dbReference type="InterPro" id="IPR022896">
    <property type="entry name" value="TrioseP_Isoase_bac/euk"/>
</dbReference>
<dbReference type="InterPro" id="IPR000652">
    <property type="entry name" value="Triosephosphate_isomerase"/>
</dbReference>
<dbReference type="InterPro" id="IPR020861">
    <property type="entry name" value="Triosephosphate_isomerase_AS"/>
</dbReference>
<dbReference type="NCBIfam" id="TIGR00419">
    <property type="entry name" value="tim"/>
    <property type="match status" value="1"/>
</dbReference>
<dbReference type="PANTHER" id="PTHR21139">
    <property type="entry name" value="TRIOSEPHOSPHATE ISOMERASE"/>
    <property type="match status" value="1"/>
</dbReference>
<dbReference type="PANTHER" id="PTHR21139:SF42">
    <property type="entry name" value="TRIOSEPHOSPHATE ISOMERASE"/>
    <property type="match status" value="1"/>
</dbReference>
<dbReference type="Pfam" id="PF00121">
    <property type="entry name" value="TIM"/>
    <property type="match status" value="1"/>
</dbReference>
<dbReference type="SUPFAM" id="SSF51351">
    <property type="entry name" value="Triosephosphate isomerase (TIM)"/>
    <property type="match status" value="1"/>
</dbReference>
<dbReference type="PROSITE" id="PS00171">
    <property type="entry name" value="TIM_1"/>
    <property type="match status" value="1"/>
</dbReference>
<dbReference type="PROSITE" id="PS51440">
    <property type="entry name" value="TIM_2"/>
    <property type="match status" value="1"/>
</dbReference>
<keyword id="KW-0963">Cytoplasm</keyword>
<keyword id="KW-0312">Gluconeogenesis</keyword>
<keyword id="KW-0324">Glycolysis</keyword>
<keyword id="KW-0413">Isomerase</keyword>
<comment type="function">
    <text evidence="1">Involved in the gluconeogenesis. Catalyzes stereospecifically the conversion of dihydroxyacetone phosphate (DHAP) to D-glyceraldehyde-3-phosphate (G3P).</text>
</comment>
<comment type="catalytic activity">
    <reaction evidence="1">
        <text>D-glyceraldehyde 3-phosphate = dihydroxyacetone phosphate</text>
        <dbReference type="Rhea" id="RHEA:18585"/>
        <dbReference type="ChEBI" id="CHEBI:57642"/>
        <dbReference type="ChEBI" id="CHEBI:59776"/>
        <dbReference type="EC" id="5.3.1.1"/>
    </reaction>
</comment>
<comment type="pathway">
    <text evidence="1">Carbohydrate biosynthesis; gluconeogenesis.</text>
</comment>
<comment type="pathway">
    <text evidence="1">Carbohydrate degradation; glycolysis; D-glyceraldehyde 3-phosphate from glycerone phosphate: step 1/1.</text>
</comment>
<comment type="subunit">
    <text evidence="1">Homodimer.</text>
</comment>
<comment type="subcellular location">
    <subcellularLocation>
        <location evidence="1">Cytoplasm</location>
    </subcellularLocation>
</comment>
<comment type="similarity">
    <text evidence="1">Belongs to the triosephosphate isomerase family.</text>
</comment>
<sequence>MKKKIIAANWKLNGSIKTISYFLTFLKSQISSFLKNNIIIIAPPTVFLERVYKDINSINIHLAAQNIDVNLTGAFTGENSALMMKDIGVKYIIIGHSERRLLHNENNEIIAKKFCLVKNLNLVPILCIGETEAEKKSNKTEKILKEQLNSIFNSFGEKAFRNAVIAYEPIWSIGTGVSADPKNVQLIHKFIKNYIKKYDIVSAENLIVQYGGSVTSLNAGNFLKQPDIDGLLIGSASLKHEEFLKIIKISDSFL</sequence>